<gene>
    <name type="primary">IPI1</name>
    <name type="ordered locus">DEHA2F14608g</name>
</gene>
<dbReference type="EMBL" id="CR382138">
    <property type="protein sequence ID" value="CAG89363.2"/>
    <property type="molecule type" value="Genomic_DNA"/>
</dbReference>
<dbReference type="RefSeq" id="XP_460997.2">
    <property type="nucleotide sequence ID" value="XM_460997.1"/>
</dbReference>
<dbReference type="SMR" id="Q6BLC4"/>
<dbReference type="FunCoup" id="Q6BLC4">
    <property type="interactions" value="265"/>
</dbReference>
<dbReference type="STRING" id="284592.Q6BLC4"/>
<dbReference type="GeneID" id="2903693"/>
<dbReference type="KEGG" id="dha:DEHA2F14608g"/>
<dbReference type="VEuPathDB" id="FungiDB:DEHA2F14608g"/>
<dbReference type="eggNOG" id="KOG2149">
    <property type="taxonomic scope" value="Eukaryota"/>
</dbReference>
<dbReference type="HOGENOM" id="CLU_050252_2_0_1"/>
<dbReference type="InParanoid" id="Q6BLC4"/>
<dbReference type="OMA" id="CAGGWVK"/>
<dbReference type="OrthoDB" id="361362at2759"/>
<dbReference type="Proteomes" id="UP000000599">
    <property type="component" value="Chromosome F"/>
</dbReference>
<dbReference type="GO" id="GO:0005829">
    <property type="term" value="C:cytosol"/>
    <property type="evidence" value="ECO:0007669"/>
    <property type="project" value="EnsemblFungi"/>
</dbReference>
<dbReference type="GO" id="GO:0005654">
    <property type="term" value="C:nucleoplasm"/>
    <property type="evidence" value="ECO:0007669"/>
    <property type="project" value="EnsemblFungi"/>
</dbReference>
<dbReference type="GO" id="GO:0120330">
    <property type="term" value="C:rixosome complex"/>
    <property type="evidence" value="ECO:0007669"/>
    <property type="project" value="EnsemblFungi"/>
</dbReference>
<dbReference type="GO" id="GO:0003682">
    <property type="term" value="F:chromatin binding"/>
    <property type="evidence" value="ECO:0007669"/>
    <property type="project" value="EnsemblFungi"/>
</dbReference>
<dbReference type="GO" id="GO:0000463">
    <property type="term" value="P:maturation of LSU-rRNA from tricistronic rRNA transcript (SSU-rRNA, 5.8S rRNA, LSU-rRNA)"/>
    <property type="evidence" value="ECO:0007669"/>
    <property type="project" value="EnsemblFungi"/>
</dbReference>
<dbReference type="GO" id="GO:0006267">
    <property type="term" value="P:pre-replicative complex assembly involved in nuclear cell cycle DNA replication"/>
    <property type="evidence" value="ECO:0007669"/>
    <property type="project" value="EnsemblFungi"/>
</dbReference>
<dbReference type="GO" id="GO:0030174">
    <property type="term" value="P:regulation of DNA-templated DNA replication initiation"/>
    <property type="evidence" value="ECO:0007669"/>
    <property type="project" value="EnsemblFungi"/>
</dbReference>
<dbReference type="GO" id="GO:0000027">
    <property type="term" value="P:ribosomal large subunit assembly"/>
    <property type="evidence" value="ECO:0007669"/>
    <property type="project" value="EnsemblFungi"/>
</dbReference>
<dbReference type="Gene3D" id="1.25.10.10">
    <property type="entry name" value="Leucine-rich Repeat Variant"/>
    <property type="match status" value="1"/>
</dbReference>
<dbReference type="InterPro" id="IPR011989">
    <property type="entry name" value="ARM-like"/>
</dbReference>
<dbReference type="InterPro" id="IPR016024">
    <property type="entry name" value="ARM-type_fold"/>
</dbReference>
<dbReference type="InterPro" id="IPR024679">
    <property type="entry name" value="Ipi1_N"/>
</dbReference>
<dbReference type="PANTHER" id="PTHR16056">
    <property type="entry name" value="REGULATOR OF MICROTUBULE DYNAMICS PROTEIN"/>
    <property type="match status" value="1"/>
</dbReference>
<dbReference type="PANTHER" id="PTHR16056:SF2">
    <property type="entry name" value="TESTIS-EXPRESSED PROTEIN 10"/>
    <property type="match status" value="1"/>
</dbReference>
<dbReference type="Pfam" id="PF12333">
    <property type="entry name" value="Ipi1_N"/>
    <property type="match status" value="1"/>
</dbReference>
<dbReference type="SUPFAM" id="SSF48371">
    <property type="entry name" value="ARM repeat"/>
    <property type="match status" value="1"/>
</dbReference>
<protein>
    <recommendedName>
        <fullName>Pre-rRNA-processing protein IPI1</fullName>
    </recommendedName>
</protein>
<sequence length="358" mass="40342">MGSKRKKAEKQKDFVKAKLRVGKTAAKPDNHTDTSFIAKSISIPNQTINKKTSNTEKKYEVDLAHHLSLTKHHSDVTRKEVLNYIEQHLPSNPSLYKDILTSIVPLIIDQSQNVRNALTSLLSACATQQVGLLDLHIRSIILFIHSAMSHIKPDIRNSSTKFLSVLIDHATESLVRSYFIKTLKSYFTLLSWTLTNDKKAVSLAITTSSSIGGPSKKARIHHLSILRAFLSAALFPISSNERKLDYSKIKMIHPESYKYLLASSTQPFASLKLFVQEVPKQKNTDIQQNTKKDDNAFSLNDLDTVSTEDIDTRRKVMLDVFMAPMLRNLKNLIKEGGEVGREAHSCMKVLEQLQSETK</sequence>
<accession>Q6BLC4</accession>
<proteinExistence type="inferred from homology"/>
<comment type="function">
    <text evidence="1">Component of the RIX1 complex required for processing of ITS2 sequences from 35S pre-rRNA.</text>
</comment>
<comment type="subunit">
    <text evidence="1">Component of the RIX1 complex, composed of IPI1, RIX1/IPI2 and IPI3 in a 1:2:2 stoichiometry. The complex interacts (via RIX1) with MDN1 (via its hexameric AAA ATPase ring) and the pre-60S ribosome particles.</text>
</comment>
<comment type="subcellular location">
    <subcellularLocation>
        <location evidence="1">Nucleus</location>
    </subcellularLocation>
</comment>
<comment type="similarity">
    <text evidence="2">Belongs to the IPI1/TEX10 family.</text>
</comment>
<reference key="1">
    <citation type="journal article" date="2004" name="Nature">
        <title>Genome evolution in yeasts.</title>
        <authorList>
            <person name="Dujon B."/>
            <person name="Sherman D."/>
            <person name="Fischer G."/>
            <person name="Durrens P."/>
            <person name="Casaregola S."/>
            <person name="Lafontaine I."/>
            <person name="de Montigny J."/>
            <person name="Marck C."/>
            <person name="Neuveglise C."/>
            <person name="Talla E."/>
            <person name="Goffard N."/>
            <person name="Frangeul L."/>
            <person name="Aigle M."/>
            <person name="Anthouard V."/>
            <person name="Babour A."/>
            <person name="Barbe V."/>
            <person name="Barnay S."/>
            <person name="Blanchin S."/>
            <person name="Beckerich J.-M."/>
            <person name="Beyne E."/>
            <person name="Bleykasten C."/>
            <person name="Boisrame A."/>
            <person name="Boyer J."/>
            <person name="Cattolico L."/>
            <person name="Confanioleri F."/>
            <person name="de Daruvar A."/>
            <person name="Despons L."/>
            <person name="Fabre E."/>
            <person name="Fairhead C."/>
            <person name="Ferry-Dumazet H."/>
            <person name="Groppi A."/>
            <person name="Hantraye F."/>
            <person name="Hennequin C."/>
            <person name="Jauniaux N."/>
            <person name="Joyet P."/>
            <person name="Kachouri R."/>
            <person name="Kerrest A."/>
            <person name="Koszul R."/>
            <person name="Lemaire M."/>
            <person name="Lesur I."/>
            <person name="Ma L."/>
            <person name="Muller H."/>
            <person name="Nicaud J.-M."/>
            <person name="Nikolski M."/>
            <person name="Oztas S."/>
            <person name="Ozier-Kalogeropoulos O."/>
            <person name="Pellenz S."/>
            <person name="Potier S."/>
            <person name="Richard G.-F."/>
            <person name="Straub M.-L."/>
            <person name="Suleau A."/>
            <person name="Swennen D."/>
            <person name="Tekaia F."/>
            <person name="Wesolowski-Louvel M."/>
            <person name="Westhof E."/>
            <person name="Wirth B."/>
            <person name="Zeniou-Meyer M."/>
            <person name="Zivanovic Y."/>
            <person name="Bolotin-Fukuhara M."/>
            <person name="Thierry A."/>
            <person name="Bouchier C."/>
            <person name="Caudron B."/>
            <person name="Scarpelli C."/>
            <person name="Gaillardin C."/>
            <person name="Weissenbach J."/>
            <person name="Wincker P."/>
            <person name="Souciet J.-L."/>
        </authorList>
    </citation>
    <scope>NUCLEOTIDE SEQUENCE [LARGE SCALE GENOMIC DNA]</scope>
    <source>
        <strain>ATCC 36239 / CBS 767 / BCRC 21394 / JCM 1990 / NBRC 0083 / IGC 2968</strain>
    </source>
</reference>
<feature type="chain" id="PRO_0000308719" description="Pre-rRNA-processing protein IPI1">
    <location>
        <begin position="1"/>
        <end position="358"/>
    </location>
</feature>
<keyword id="KW-0539">Nucleus</keyword>
<keyword id="KW-1185">Reference proteome</keyword>
<keyword id="KW-0690">Ribosome biogenesis</keyword>
<keyword id="KW-0698">rRNA processing</keyword>
<evidence type="ECO:0000250" key="1">
    <source>
        <dbReference type="UniProtKB" id="P38803"/>
    </source>
</evidence>
<evidence type="ECO:0000305" key="2"/>
<organism>
    <name type="scientific">Debaryomyces hansenii (strain ATCC 36239 / CBS 767 / BCRC 21394 / JCM 1990 / NBRC 0083 / IGC 2968)</name>
    <name type="common">Yeast</name>
    <name type="synonym">Torulaspora hansenii</name>
    <dbReference type="NCBI Taxonomy" id="284592"/>
    <lineage>
        <taxon>Eukaryota</taxon>
        <taxon>Fungi</taxon>
        <taxon>Dikarya</taxon>
        <taxon>Ascomycota</taxon>
        <taxon>Saccharomycotina</taxon>
        <taxon>Pichiomycetes</taxon>
        <taxon>Debaryomycetaceae</taxon>
        <taxon>Debaryomyces</taxon>
    </lineage>
</organism>
<name>IPI1_DEBHA</name>